<reference key="1">
    <citation type="journal article" date="1996" name="Microbiology">
        <title>The Bacillus subtilis genes for ribonucleotide reductase are similar to the genes for the second class I NrdE/NrdF enzymes of Enterobacteriaceae.</title>
        <authorList>
            <person name="Scotti C."/>
            <person name="Valbuzzi A."/>
            <person name="Perego M."/>
            <person name="Galizzi A."/>
            <person name="Albertini A.M."/>
        </authorList>
    </citation>
    <scope>NUCLEOTIDE SEQUENCE [GENOMIC DNA]</scope>
    <scope>OPERON</scope>
    <scope>DISRUPTION PHENOTYPE</scope>
    <source>
        <strain>168</strain>
    </source>
</reference>
<reference key="2">
    <citation type="journal article" date="1997" name="Nature">
        <title>The complete genome sequence of the Gram-positive bacterium Bacillus subtilis.</title>
        <authorList>
            <person name="Kunst F."/>
            <person name="Ogasawara N."/>
            <person name="Moszer I."/>
            <person name="Albertini A.M."/>
            <person name="Alloni G."/>
            <person name="Azevedo V."/>
            <person name="Bertero M.G."/>
            <person name="Bessieres P."/>
            <person name="Bolotin A."/>
            <person name="Borchert S."/>
            <person name="Borriss R."/>
            <person name="Boursier L."/>
            <person name="Brans A."/>
            <person name="Braun M."/>
            <person name="Brignell S.C."/>
            <person name="Bron S."/>
            <person name="Brouillet S."/>
            <person name="Bruschi C.V."/>
            <person name="Caldwell B."/>
            <person name="Capuano V."/>
            <person name="Carter N.M."/>
            <person name="Choi S.-K."/>
            <person name="Codani J.-J."/>
            <person name="Connerton I.F."/>
            <person name="Cummings N.J."/>
            <person name="Daniel R.A."/>
            <person name="Denizot F."/>
            <person name="Devine K.M."/>
            <person name="Duesterhoeft A."/>
            <person name="Ehrlich S.D."/>
            <person name="Emmerson P.T."/>
            <person name="Entian K.-D."/>
            <person name="Errington J."/>
            <person name="Fabret C."/>
            <person name="Ferrari E."/>
            <person name="Foulger D."/>
            <person name="Fritz C."/>
            <person name="Fujita M."/>
            <person name="Fujita Y."/>
            <person name="Fuma S."/>
            <person name="Galizzi A."/>
            <person name="Galleron N."/>
            <person name="Ghim S.-Y."/>
            <person name="Glaser P."/>
            <person name="Goffeau A."/>
            <person name="Golightly E.J."/>
            <person name="Grandi G."/>
            <person name="Guiseppi G."/>
            <person name="Guy B.J."/>
            <person name="Haga K."/>
            <person name="Haiech J."/>
            <person name="Harwood C.R."/>
            <person name="Henaut A."/>
            <person name="Hilbert H."/>
            <person name="Holsappel S."/>
            <person name="Hosono S."/>
            <person name="Hullo M.-F."/>
            <person name="Itaya M."/>
            <person name="Jones L.-M."/>
            <person name="Joris B."/>
            <person name="Karamata D."/>
            <person name="Kasahara Y."/>
            <person name="Klaerr-Blanchard M."/>
            <person name="Klein C."/>
            <person name="Kobayashi Y."/>
            <person name="Koetter P."/>
            <person name="Koningstein G."/>
            <person name="Krogh S."/>
            <person name="Kumano M."/>
            <person name="Kurita K."/>
            <person name="Lapidus A."/>
            <person name="Lardinois S."/>
            <person name="Lauber J."/>
            <person name="Lazarevic V."/>
            <person name="Lee S.-M."/>
            <person name="Levine A."/>
            <person name="Liu H."/>
            <person name="Masuda S."/>
            <person name="Mauel C."/>
            <person name="Medigue C."/>
            <person name="Medina N."/>
            <person name="Mellado R.P."/>
            <person name="Mizuno M."/>
            <person name="Moestl D."/>
            <person name="Nakai S."/>
            <person name="Noback M."/>
            <person name="Noone D."/>
            <person name="O'Reilly M."/>
            <person name="Ogawa K."/>
            <person name="Ogiwara A."/>
            <person name="Oudega B."/>
            <person name="Park S.-H."/>
            <person name="Parro V."/>
            <person name="Pohl T.M."/>
            <person name="Portetelle D."/>
            <person name="Porwollik S."/>
            <person name="Prescott A.M."/>
            <person name="Presecan E."/>
            <person name="Pujic P."/>
            <person name="Purnelle B."/>
            <person name="Rapoport G."/>
            <person name="Rey M."/>
            <person name="Reynolds S."/>
            <person name="Rieger M."/>
            <person name="Rivolta C."/>
            <person name="Rocha E."/>
            <person name="Roche B."/>
            <person name="Rose M."/>
            <person name="Sadaie Y."/>
            <person name="Sato T."/>
            <person name="Scanlan E."/>
            <person name="Schleich S."/>
            <person name="Schroeter R."/>
            <person name="Scoffone F."/>
            <person name="Sekiguchi J."/>
            <person name="Sekowska A."/>
            <person name="Seror S.J."/>
            <person name="Serror P."/>
            <person name="Shin B.-S."/>
            <person name="Soldo B."/>
            <person name="Sorokin A."/>
            <person name="Tacconi E."/>
            <person name="Takagi T."/>
            <person name="Takahashi H."/>
            <person name="Takemaru K."/>
            <person name="Takeuchi M."/>
            <person name="Tamakoshi A."/>
            <person name="Tanaka T."/>
            <person name="Terpstra P."/>
            <person name="Tognoni A."/>
            <person name="Tosato V."/>
            <person name="Uchiyama S."/>
            <person name="Vandenbol M."/>
            <person name="Vannier F."/>
            <person name="Vassarotti A."/>
            <person name="Viari A."/>
            <person name="Wambutt R."/>
            <person name="Wedler E."/>
            <person name="Wedler H."/>
            <person name="Weitzenegger T."/>
            <person name="Winters P."/>
            <person name="Wipat A."/>
            <person name="Yamamoto H."/>
            <person name="Yamane K."/>
            <person name="Yasumoto K."/>
            <person name="Yata K."/>
            <person name="Yoshida K."/>
            <person name="Yoshikawa H.-F."/>
            <person name="Zumstein E."/>
            <person name="Yoshikawa H."/>
            <person name="Danchin A."/>
        </authorList>
    </citation>
    <scope>NUCLEOTIDE SEQUENCE [LARGE SCALE GENOMIC DNA]</scope>
    <source>
        <strain>168</strain>
    </source>
</reference>
<reference key="3">
    <citation type="journal article" date="1993" name="J. Bacteriol.">
        <title>Molecular cloning of a sporulation-specific cell wall hydrolase gene of Bacillus subtilis.</title>
        <authorList>
            <person name="Kuroda A."/>
            <person name="Asami Y."/>
            <person name="Sekiguchi J."/>
        </authorList>
    </citation>
    <scope>NUCLEOTIDE SEQUENCE [GENOMIC DNA] OF 197-206</scope>
    <source>
        <strain>168</strain>
    </source>
</reference>
<comment type="induction">
    <text evidence="1">Part of the probable nrdI(ymaA)-nrdE-nrdF-ymaB operon. Expression is constitutive but low, dramatically induced by thymidine starvation which requires recA.</text>
</comment>
<comment type="disruption phenotype">
    <text evidence="1">Essential, at least the last 3 genes of the locus cannot be deleted; could be due to polar effects on downstream ymaB.</text>
</comment>
<proteinExistence type="evidence at transcript level"/>
<organism>
    <name type="scientific">Bacillus subtilis (strain 168)</name>
    <dbReference type="NCBI Taxonomy" id="224308"/>
    <lineage>
        <taxon>Bacteria</taxon>
        <taxon>Bacillati</taxon>
        <taxon>Bacillota</taxon>
        <taxon>Bacilli</taxon>
        <taxon>Bacillales</taxon>
        <taxon>Bacillaceae</taxon>
        <taxon>Bacillus</taxon>
    </lineage>
</organism>
<keyword id="KW-1185">Reference proteome</keyword>
<name>YMAB_BACSU</name>
<sequence length="206" mass="23388">MGKMDEMILVAPRDDVFKKESLTFQGVYSEDSRVAEIMAQIEAAYREMRRGDAEEDPRFKQPIPYVVIKREDEVFLYERLAGGGESRLHNKLSLGFGGHMNAIEGAASFAEVLKLNTDRELEEELQINEEDKQAIVTLGLINDDENSVGKVHIGILSALQLKPGAQVEVKEKEQIAGKWMKVSELKQDDIYNRLETWSQFVVDILE</sequence>
<protein>
    <recommendedName>
        <fullName>Protein YmaB</fullName>
    </recommendedName>
</protein>
<gene>
    <name type="primary">ymaB</name>
    <name type="ordered locus">BSU17400</name>
</gene>
<feature type="chain" id="PRO_0000049630" description="Protein YmaB">
    <location>
        <begin position="1"/>
        <end position="206"/>
    </location>
</feature>
<accession>P50619</accession>
<evidence type="ECO:0000269" key="1">
    <source>
    </source>
</evidence>
<dbReference type="EMBL" id="Z68500">
    <property type="protein sequence ID" value="CAA92812.1"/>
    <property type="molecule type" value="Genomic_DNA"/>
</dbReference>
<dbReference type="EMBL" id="AL009126">
    <property type="protein sequence ID" value="CAB13624.1"/>
    <property type="molecule type" value="Genomic_DNA"/>
</dbReference>
<dbReference type="EMBL" id="D14666">
    <property type="status" value="NOT_ANNOTATED_CDS"/>
    <property type="molecule type" value="Genomic_DNA"/>
</dbReference>
<dbReference type="PIR" id="D69883">
    <property type="entry name" value="D69883"/>
</dbReference>
<dbReference type="RefSeq" id="NP_389622.1">
    <property type="nucleotide sequence ID" value="NC_000964.3"/>
</dbReference>
<dbReference type="RefSeq" id="WP_003245105.1">
    <property type="nucleotide sequence ID" value="NZ_OZ025638.1"/>
</dbReference>
<dbReference type="SMR" id="P50619"/>
<dbReference type="FunCoup" id="P50619">
    <property type="interactions" value="17"/>
</dbReference>
<dbReference type="STRING" id="224308.BSU17400"/>
<dbReference type="PaxDb" id="224308-BSU17400"/>
<dbReference type="EnsemblBacteria" id="CAB13624">
    <property type="protein sequence ID" value="CAB13624"/>
    <property type="gene ID" value="BSU_17400"/>
</dbReference>
<dbReference type="GeneID" id="939453"/>
<dbReference type="KEGG" id="bsu:BSU17400"/>
<dbReference type="PATRIC" id="fig|224308.179.peg.1886"/>
<dbReference type="eggNOG" id="COG4112">
    <property type="taxonomic scope" value="Bacteria"/>
</dbReference>
<dbReference type="InParanoid" id="P50619"/>
<dbReference type="OrthoDB" id="6398375at2"/>
<dbReference type="BioCyc" id="BSUB:BSU17400-MONOMER"/>
<dbReference type="Proteomes" id="UP000001570">
    <property type="component" value="Chromosome"/>
</dbReference>
<dbReference type="Gene3D" id="3.90.79.10">
    <property type="entry name" value="Nucleoside Triphosphate Pyrophosphohydrolase"/>
    <property type="match status" value="1"/>
</dbReference>
<dbReference type="InterPro" id="IPR015797">
    <property type="entry name" value="NUDIX_hydrolase-like_dom_sf"/>
</dbReference>
<dbReference type="SUPFAM" id="SSF55811">
    <property type="entry name" value="Nudix"/>
    <property type="match status" value="1"/>
</dbReference>